<reference evidence="3" key="1">
    <citation type="journal article" date="2008" name="Toxicon">
        <title>Immunochemical and proteomic technologies as tools for unravelling toxins involved in envenoming by accidental contact with Lonomia obliqua caterpillars.</title>
        <authorList>
            <person name="Ricci-Silva M.E."/>
            <person name="Valente R.H."/>
            <person name="Leon I.R."/>
            <person name="Tambourgi D.V."/>
            <person name="Ramos O.H.P."/>
            <person name="Perales J."/>
            <person name="Chudzinski-Tavassi A.M."/>
        </authorList>
    </citation>
    <scope>PROTEIN SEQUENCE</scope>
    <source>
        <tissue evidence="1">Larval bristle</tissue>
    </source>
</reference>
<comment type="caution">
    <text evidence="1">The order of the peptides shown is unknown.</text>
</comment>
<keyword id="KW-0903">Direct protein sequencing</keyword>
<proteinExistence type="evidence at protein level"/>
<protein>
    <recommendedName>
        <fullName>Unknown protein 2</fullName>
    </recommendedName>
</protein>
<feature type="chain" id="PRO_0000302101" description="Unknown protein 2">
    <location>
        <begin position="1" status="less than"/>
        <end position="17" status="greater than"/>
    </location>
</feature>
<feature type="unsure residue" description="L or I" evidence="1">
    <location>
        <position position="9"/>
    </location>
</feature>
<feature type="non-consecutive residues" evidence="2">
    <location>
        <begin position="10"/>
        <end position="11"/>
    </location>
</feature>
<feature type="non-terminal residue" evidence="2">
    <location>
        <position position="1"/>
    </location>
</feature>
<feature type="non-terminal residue" evidence="2">
    <location>
        <position position="17"/>
    </location>
</feature>
<organism>
    <name type="scientific">Lonomia obliqua</name>
    <name type="common">Moth</name>
    <dbReference type="NCBI Taxonomy" id="304329"/>
    <lineage>
        <taxon>Eukaryota</taxon>
        <taxon>Metazoa</taxon>
        <taxon>Ecdysozoa</taxon>
        <taxon>Arthropoda</taxon>
        <taxon>Hexapoda</taxon>
        <taxon>Insecta</taxon>
        <taxon>Pterygota</taxon>
        <taxon>Neoptera</taxon>
        <taxon>Endopterygota</taxon>
        <taxon>Lepidoptera</taxon>
        <taxon>Glossata</taxon>
        <taxon>Ditrysia</taxon>
        <taxon>Bombycoidea</taxon>
        <taxon>Saturniidae</taxon>
        <taxon>Hemileucinae</taxon>
        <taxon>Lonomia</taxon>
    </lineage>
</organism>
<evidence type="ECO:0000269" key="1">
    <source>
    </source>
</evidence>
<evidence type="ECO:0000303" key="2">
    <source>
    </source>
</evidence>
<evidence type="ECO:0000305" key="3"/>
<accession>P85260</accession>
<name>UP02_LONON</name>
<sequence>EEVQETVNLKYEYSVYR</sequence>